<sequence length="973" mass="111033">MSSHHQILQIRSDPFVLSHCCRHTRLTSSLTLQSPLKQPFSCLPFRWRRSYRGGVRSSTTETHGSKKEALVSETATTSIELKRVYPFHEIEPKWQRYWEDNRIFRTPDDVDTSKPKFYVLDMFPYPSGAGLHVGHPLGYTATDILARLRRMQGYNVLHPMGWDAFGLPAEQYAIETGTHPKTTTLKNIDRFRLQLKSLGFSYDWDRELSTTEPDYYKWTQWIFLQLYKKGLAYQAEVPVNWCPALGTVLANEEVVDGVSERGGHPVIRKPMRQWMLKITAYADRLLEDLDELEWPESIKEMQRNWIGRSEGAELNFSILDGEGRETDKEITVYTTRPDTLFGATYMVVAPEHQLLSYFVTAEQKQQVEEYKDFASRKSDLERTELQKDKTGVFTGCYAKNPANGDAIPIWVADYVLASYGTGAIMAVPAHDTRDNEFALKYNIPIKWVVRNEANSSDDAKQVYPGLGIIENSSTLETGLDINQLSSKEAALKVIEWAERTGNGKKKVNYKLRDWLFARQRYWGEPIPILILDESGETIAISESELPLTLPELNDFTPTGTGEPPLSKAVSWVNTVDPSTGKPAKRETSTMPQWAGSCWYYLRFMDPKNPEALVDKEKEKYWSPVDVYVGGAEHAVLHLLYSRFWHKVLYDIGVVSTKEPFKCVINQGIILGEVQYTAWKDQEGNYVSADTEERLNEHQQVTIPEEKVIKSGDHFVLKEDPSIRLIPRVYKMSKSRGNVVNPDDVVLEYGADSLRLYEMFMGPFRDSKTWNTSGIEGVHRFLARTWRLVIGLPQSDGSFKDGTLVTDDEPTLEQLRTLHKCIAKVTEEIESTRFNTGISGMMEFVNAAYKWNNQPRGIIEPFVLLLSPYAPHMAEELWSRLGHPNSLAYESFPKANPDYLKNTTIVLPVQINGKTRGTIEVEEGCSEDDAFVLASQDDKLRKYLDGQSIKKRIYVPGKILNVILDRTNVKVTTK</sequence>
<protein>
    <recommendedName>
        <fullName evidence="6">Leucine--tRNA ligase, chloroplastic/mitochondrial</fullName>
        <ecNumber evidence="6">6.1.1.4</ecNumber>
    </recommendedName>
    <alternativeName>
        <fullName evidence="6">Leucyl-tRNA synthetase</fullName>
        <shortName evidence="6">LeuRS</shortName>
    </alternativeName>
    <alternativeName>
        <fullName evidence="5">Protein EMBRYO DEFECTIVE 2369</fullName>
    </alternativeName>
</protein>
<reference key="1">
    <citation type="journal article" date="1999" name="Nature">
        <title>Sequence and analysis of chromosome 4 of the plant Arabidopsis thaliana.</title>
        <authorList>
            <person name="Mayer K.F.X."/>
            <person name="Schueller C."/>
            <person name="Wambutt R."/>
            <person name="Murphy G."/>
            <person name="Volckaert G."/>
            <person name="Pohl T."/>
            <person name="Duesterhoeft A."/>
            <person name="Stiekema W."/>
            <person name="Entian K.-D."/>
            <person name="Terryn N."/>
            <person name="Harris B."/>
            <person name="Ansorge W."/>
            <person name="Brandt P."/>
            <person name="Grivell L.A."/>
            <person name="Rieger M."/>
            <person name="Weichselgartner M."/>
            <person name="de Simone V."/>
            <person name="Obermaier B."/>
            <person name="Mache R."/>
            <person name="Mueller M."/>
            <person name="Kreis M."/>
            <person name="Delseny M."/>
            <person name="Puigdomenech P."/>
            <person name="Watson M."/>
            <person name="Schmidtheini T."/>
            <person name="Reichert B."/>
            <person name="Portetelle D."/>
            <person name="Perez-Alonso M."/>
            <person name="Boutry M."/>
            <person name="Bancroft I."/>
            <person name="Vos P."/>
            <person name="Hoheisel J."/>
            <person name="Zimmermann W."/>
            <person name="Wedler H."/>
            <person name="Ridley P."/>
            <person name="Langham S.-A."/>
            <person name="McCullagh B."/>
            <person name="Bilham L."/>
            <person name="Robben J."/>
            <person name="van der Schueren J."/>
            <person name="Grymonprez B."/>
            <person name="Chuang Y.-J."/>
            <person name="Vandenbussche F."/>
            <person name="Braeken M."/>
            <person name="Weltjens I."/>
            <person name="Voet M."/>
            <person name="Bastiaens I."/>
            <person name="Aert R."/>
            <person name="Defoor E."/>
            <person name="Weitzenegger T."/>
            <person name="Bothe G."/>
            <person name="Ramsperger U."/>
            <person name="Hilbert H."/>
            <person name="Braun M."/>
            <person name="Holzer E."/>
            <person name="Brandt A."/>
            <person name="Peters S."/>
            <person name="van Staveren M."/>
            <person name="Dirkse W."/>
            <person name="Mooijman P."/>
            <person name="Klein Lankhorst R."/>
            <person name="Rose M."/>
            <person name="Hauf J."/>
            <person name="Koetter P."/>
            <person name="Berneiser S."/>
            <person name="Hempel S."/>
            <person name="Feldpausch M."/>
            <person name="Lamberth S."/>
            <person name="Van den Daele H."/>
            <person name="De Keyser A."/>
            <person name="Buysshaert C."/>
            <person name="Gielen J."/>
            <person name="Villarroel R."/>
            <person name="De Clercq R."/>
            <person name="van Montagu M."/>
            <person name="Rogers J."/>
            <person name="Cronin A."/>
            <person name="Quail M.A."/>
            <person name="Bray-Allen S."/>
            <person name="Clark L."/>
            <person name="Doggett J."/>
            <person name="Hall S."/>
            <person name="Kay M."/>
            <person name="Lennard N."/>
            <person name="McLay K."/>
            <person name="Mayes R."/>
            <person name="Pettett A."/>
            <person name="Rajandream M.A."/>
            <person name="Lyne M."/>
            <person name="Benes V."/>
            <person name="Rechmann S."/>
            <person name="Borkova D."/>
            <person name="Bloecker H."/>
            <person name="Scharfe M."/>
            <person name="Grimm M."/>
            <person name="Loehnert T.-H."/>
            <person name="Dose S."/>
            <person name="de Haan M."/>
            <person name="Maarse A.C."/>
            <person name="Schaefer M."/>
            <person name="Mueller-Auer S."/>
            <person name="Gabel C."/>
            <person name="Fuchs M."/>
            <person name="Fartmann B."/>
            <person name="Granderath K."/>
            <person name="Dauner D."/>
            <person name="Herzl A."/>
            <person name="Neumann S."/>
            <person name="Argiriou A."/>
            <person name="Vitale D."/>
            <person name="Liguori R."/>
            <person name="Piravandi E."/>
            <person name="Massenet O."/>
            <person name="Quigley F."/>
            <person name="Clabauld G."/>
            <person name="Muendlein A."/>
            <person name="Felber R."/>
            <person name="Schnabl S."/>
            <person name="Hiller R."/>
            <person name="Schmidt W."/>
            <person name="Lecharny A."/>
            <person name="Aubourg S."/>
            <person name="Chefdor F."/>
            <person name="Cooke R."/>
            <person name="Berger C."/>
            <person name="Monfort A."/>
            <person name="Casacuberta E."/>
            <person name="Gibbons T."/>
            <person name="Weber N."/>
            <person name="Vandenbol M."/>
            <person name="Bargues M."/>
            <person name="Terol J."/>
            <person name="Torres A."/>
            <person name="Perez-Perez A."/>
            <person name="Purnelle B."/>
            <person name="Bent E."/>
            <person name="Johnson S."/>
            <person name="Tacon D."/>
            <person name="Jesse T."/>
            <person name="Heijnen L."/>
            <person name="Schwarz S."/>
            <person name="Scholler P."/>
            <person name="Heber S."/>
            <person name="Francs P."/>
            <person name="Bielke C."/>
            <person name="Frishman D."/>
            <person name="Haase D."/>
            <person name="Lemcke K."/>
            <person name="Mewes H.-W."/>
            <person name="Stocker S."/>
            <person name="Zaccaria P."/>
            <person name="Bevan M."/>
            <person name="Wilson R.K."/>
            <person name="de la Bastide M."/>
            <person name="Habermann K."/>
            <person name="Parnell L."/>
            <person name="Dedhia N."/>
            <person name="Gnoj L."/>
            <person name="Schutz K."/>
            <person name="Huang E."/>
            <person name="Spiegel L."/>
            <person name="Sekhon M."/>
            <person name="Murray J."/>
            <person name="Sheet P."/>
            <person name="Cordes M."/>
            <person name="Abu-Threideh J."/>
            <person name="Stoneking T."/>
            <person name="Kalicki J."/>
            <person name="Graves T."/>
            <person name="Harmon G."/>
            <person name="Edwards J."/>
            <person name="Latreille P."/>
            <person name="Courtney L."/>
            <person name="Cloud J."/>
            <person name="Abbott A."/>
            <person name="Scott K."/>
            <person name="Johnson D."/>
            <person name="Minx P."/>
            <person name="Bentley D."/>
            <person name="Fulton B."/>
            <person name="Miller N."/>
            <person name="Greco T."/>
            <person name="Kemp K."/>
            <person name="Kramer J."/>
            <person name="Fulton L."/>
            <person name="Mardis E."/>
            <person name="Dante M."/>
            <person name="Pepin K."/>
            <person name="Hillier L.W."/>
            <person name="Nelson J."/>
            <person name="Spieth J."/>
            <person name="Ryan E."/>
            <person name="Andrews S."/>
            <person name="Geisel C."/>
            <person name="Layman D."/>
            <person name="Du H."/>
            <person name="Ali J."/>
            <person name="Berghoff A."/>
            <person name="Jones K."/>
            <person name="Drone K."/>
            <person name="Cotton M."/>
            <person name="Joshu C."/>
            <person name="Antonoiu B."/>
            <person name="Zidanic M."/>
            <person name="Strong C."/>
            <person name="Sun H."/>
            <person name="Lamar B."/>
            <person name="Yordan C."/>
            <person name="Ma P."/>
            <person name="Zhong J."/>
            <person name="Preston R."/>
            <person name="Vil D."/>
            <person name="Shekher M."/>
            <person name="Matero A."/>
            <person name="Shah R."/>
            <person name="Swaby I.K."/>
            <person name="O'Shaughnessy A."/>
            <person name="Rodriguez M."/>
            <person name="Hoffman J."/>
            <person name="Till S."/>
            <person name="Granat S."/>
            <person name="Shohdy N."/>
            <person name="Hasegawa A."/>
            <person name="Hameed A."/>
            <person name="Lodhi M."/>
            <person name="Johnson A."/>
            <person name="Chen E."/>
            <person name="Marra M.A."/>
            <person name="Martienssen R."/>
            <person name="McCombie W.R."/>
        </authorList>
    </citation>
    <scope>NUCLEOTIDE SEQUENCE [LARGE SCALE GENOMIC DNA]</scope>
    <source>
        <strain>cv. Columbia</strain>
    </source>
</reference>
<reference key="2">
    <citation type="journal article" date="2017" name="Plant J.">
        <title>Araport11: a complete reannotation of the Arabidopsis thaliana reference genome.</title>
        <authorList>
            <person name="Cheng C.Y."/>
            <person name="Krishnakumar V."/>
            <person name="Chan A.P."/>
            <person name="Thibaud-Nissen F."/>
            <person name="Schobel S."/>
            <person name="Town C.D."/>
        </authorList>
    </citation>
    <scope>GENOME REANNOTATION</scope>
    <source>
        <strain>cv. Columbia</strain>
    </source>
</reference>
<reference key="3">
    <citation type="journal article" date="2003" name="Science">
        <title>Empirical analysis of transcriptional activity in the Arabidopsis genome.</title>
        <authorList>
            <person name="Yamada K."/>
            <person name="Lim J."/>
            <person name="Dale J.M."/>
            <person name="Chen H."/>
            <person name="Shinn P."/>
            <person name="Palm C.J."/>
            <person name="Southwick A.M."/>
            <person name="Wu H.C."/>
            <person name="Kim C.J."/>
            <person name="Nguyen M."/>
            <person name="Pham P.K."/>
            <person name="Cheuk R.F."/>
            <person name="Karlin-Newmann G."/>
            <person name="Liu S.X."/>
            <person name="Lam B."/>
            <person name="Sakano H."/>
            <person name="Wu T."/>
            <person name="Yu G."/>
            <person name="Miranda M."/>
            <person name="Quach H.L."/>
            <person name="Tripp M."/>
            <person name="Chang C.H."/>
            <person name="Lee J.M."/>
            <person name="Toriumi M.J."/>
            <person name="Chan M.M."/>
            <person name="Tang C.C."/>
            <person name="Onodera C.S."/>
            <person name="Deng J.M."/>
            <person name="Akiyama K."/>
            <person name="Ansari Y."/>
            <person name="Arakawa T."/>
            <person name="Banh J."/>
            <person name="Banno F."/>
            <person name="Bowser L."/>
            <person name="Brooks S.Y."/>
            <person name="Carninci P."/>
            <person name="Chao Q."/>
            <person name="Choy N."/>
            <person name="Enju A."/>
            <person name="Goldsmith A.D."/>
            <person name="Gurjal M."/>
            <person name="Hansen N.F."/>
            <person name="Hayashizaki Y."/>
            <person name="Johnson-Hopson C."/>
            <person name="Hsuan V.W."/>
            <person name="Iida K."/>
            <person name="Karnes M."/>
            <person name="Khan S."/>
            <person name="Koesema E."/>
            <person name="Ishida J."/>
            <person name="Jiang P.X."/>
            <person name="Jones T."/>
            <person name="Kawai J."/>
            <person name="Kamiya A."/>
            <person name="Meyers C."/>
            <person name="Nakajima M."/>
            <person name="Narusaka M."/>
            <person name="Seki M."/>
            <person name="Sakurai T."/>
            <person name="Satou M."/>
            <person name="Tamse R."/>
            <person name="Vaysberg M."/>
            <person name="Wallender E.K."/>
            <person name="Wong C."/>
            <person name="Yamamura Y."/>
            <person name="Yuan S."/>
            <person name="Shinozaki K."/>
            <person name="Davis R.W."/>
            <person name="Theologis A."/>
            <person name="Ecker J.R."/>
        </authorList>
    </citation>
    <scope>NUCLEOTIDE SEQUENCE [LARGE SCALE MRNA]</scope>
    <source>
        <strain>cv. Columbia</strain>
    </source>
</reference>
<reference key="4">
    <citation type="journal article" date="2005" name="Plant J.">
        <title>Requirement of aminoacyl-tRNA synthetases for gametogenesis and embryo development in Arabidopsis.</title>
        <authorList>
            <person name="Berg M."/>
            <person name="Rogers R."/>
            <person name="Muralla R."/>
            <person name="Meinke D."/>
        </authorList>
    </citation>
    <scope>DISRUPTION PHENOTYPE</scope>
</reference>
<reference key="5">
    <citation type="journal article" date="2005" name="Proc. Natl. Acad. Sci. U.S.A.">
        <title>Dual targeting is the rule for organellar aminoacyl-tRNA synthetases in Arabidopsis thaliana.</title>
        <authorList>
            <person name="Duchene A.-M."/>
            <person name="Giritch A."/>
            <person name="Hoffmann B."/>
            <person name="Cognat V."/>
            <person name="Lancelin D."/>
            <person name="Peeters N.M."/>
            <person name="Zaepfel M."/>
            <person name="Marechal-Drouard L."/>
            <person name="Small I.D."/>
        </authorList>
    </citation>
    <scope>SUBCELLULAR LOCATION</scope>
</reference>
<keyword id="KW-0030">Aminoacyl-tRNA synthetase</keyword>
<keyword id="KW-0067">ATP-binding</keyword>
<keyword id="KW-0150">Chloroplast</keyword>
<keyword id="KW-0436">Ligase</keyword>
<keyword id="KW-0496">Mitochondrion</keyword>
<keyword id="KW-0547">Nucleotide-binding</keyword>
<keyword id="KW-0934">Plastid</keyword>
<keyword id="KW-0648">Protein biosynthesis</keyword>
<keyword id="KW-1185">Reference proteome</keyword>
<keyword id="KW-0809">Transit peptide</keyword>
<dbReference type="EC" id="6.1.1.4" evidence="6"/>
<dbReference type="EMBL" id="AF069441">
    <property type="protein sequence ID" value="AAD36946.1"/>
    <property type="molecule type" value="Genomic_DNA"/>
</dbReference>
<dbReference type="EMBL" id="AL161500">
    <property type="protein sequence ID" value="CAB77903.1"/>
    <property type="molecule type" value="Genomic_DNA"/>
</dbReference>
<dbReference type="EMBL" id="CP002687">
    <property type="protein sequence ID" value="AEE82383.1"/>
    <property type="molecule type" value="Genomic_DNA"/>
</dbReference>
<dbReference type="EMBL" id="AY079159">
    <property type="protein sequence ID" value="AAL84999.1"/>
    <property type="molecule type" value="mRNA"/>
</dbReference>
<dbReference type="EMBL" id="BT002249">
    <property type="protein sequence ID" value="AAN72260.1"/>
    <property type="molecule type" value="mRNA"/>
</dbReference>
<dbReference type="PIR" id="A85055">
    <property type="entry name" value="A85055"/>
</dbReference>
<dbReference type="RefSeq" id="NP_192344.1">
    <property type="nucleotide sequence ID" value="NM_116673.7"/>
</dbReference>
<dbReference type="SMR" id="Q9XEA0"/>
<dbReference type="FunCoup" id="Q9XEA0">
    <property type="interactions" value="3317"/>
</dbReference>
<dbReference type="IntAct" id="Q9XEA0">
    <property type="interactions" value="1"/>
</dbReference>
<dbReference type="STRING" id="3702.Q9XEA0"/>
<dbReference type="PaxDb" id="3702-AT4G04350.1"/>
<dbReference type="ProteomicsDB" id="232981"/>
<dbReference type="EnsemblPlants" id="AT4G04350.1">
    <property type="protein sequence ID" value="AT4G04350.1"/>
    <property type="gene ID" value="AT4G04350"/>
</dbReference>
<dbReference type="GeneID" id="825755"/>
<dbReference type="Gramene" id="AT4G04350.1">
    <property type="protein sequence ID" value="AT4G04350.1"/>
    <property type="gene ID" value="AT4G04350"/>
</dbReference>
<dbReference type="KEGG" id="ath:AT4G04350"/>
<dbReference type="Araport" id="AT4G04350"/>
<dbReference type="TAIR" id="AT4G04350">
    <property type="gene designation" value="EMB2369"/>
</dbReference>
<dbReference type="eggNOG" id="KOG0435">
    <property type="taxonomic scope" value="Eukaryota"/>
</dbReference>
<dbReference type="HOGENOM" id="CLU_004427_0_0_1"/>
<dbReference type="InParanoid" id="Q9XEA0"/>
<dbReference type="OMA" id="GIEHACM"/>
<dbReference type="PhylomeDB" id="Q9XEA0"/>
<dbReference type="PRO" id="PR:Q9XEA0"/>
<dbReference type="Proteomes" id="UP000006548">
    <property type="component" value="Chromosome 4"/>
</dbReference>
<dbReference type="ExpressionAtlas" id="Q9XEA0">
    <property type="expression patterns" value="baseline and differential"/>
</dbReference>
<dbReference type="GO" id="GO:0009507">
    <property type="term" value="C:chloroplast"/>
    <property type="evidence" value="ECO:0000314"/>
    <property type="project" value="TAIR"/>
</dbReference>
<dbReference type="GO" id="GO:0009570">
    <property type="term" value="C:chloroplast stroma"/>
    <property type="evidence" value="ECO:0007005"/>
    <property type="project" value="TAIR"/>
</dbReference>
<dbReference type="GO" id="GO:0005739">
    <property type="term" value="C:mitochondrion"/>
    <property type="evidence" value="ECO:0000314"/>
    <property type="project" value="TAIR"/>
</dbReference>
<dbReference type="GO" id="GO:0002161">
    <property type="term" value="F:aminoacyl-tRNA deacylase activity"/>
    <property type="evidence" value="ECO:0007669"/>
    <property type="project" value="InterPro"/>
</dbReference>
<dbReference type="GO" id="GO:0005524">
    <property type="term" value="F:ATP binding"/>
    <property type="evidence" value="ECO:0007669"/>
    <property type="project" value="UniProtKB-KW"/>
</dbReference>
<dbReference type="GO" id="GO:0004823">
    <property type="term" value="F:leucine-tRNA ligase activity"/>
    <property type="evidence" value="ECO:0007669"/>
    <property type="project" value="UniProtKB-EC"/>
</dbReference>
<dbReference type="GO" id="GO:0009793">
    <property type="term" value="P:embryo development ending in seed dormancy"/>
    <property type="evidence" value="ECO:0000315"/>
    <property type="project" value="TAIR"/>
</dbReference>
<dbReference type="GO" id="GO:0006429">
    <property type="term" value="P:leucyl-tRNA aminoacylation"/>
    <property type="evidence" value="ECO:0007669"/>
    <property type="project" value="InterPro"/>
</dbReference>
<dbReference type="CDD" id="cd07958">
    <property type="entry name" value="Anticodon_Ia_Leu_BEm"/>
    <property type="match status" value="1"/>
</dbReference>
<dbReference type="CDD" id="cd00812">
    <property type="entry name" value="LeuRS_core"/>
    <property type="match status" value="1"/>
</dbReference>
<dbReference type="FunFam" id="1.10.730.10:FF:000012">
    <property type="entry name" value="Leucine--tRNA ligase"/>
    <property type="match status" value="1"/>
</dbReference>
<dbReference type="FunFam" id="3.40.50.620:FF:000056">
    <property type="entry name" value="Leucine--tRNA ligase"/>
    <property type="match status" value="1"/>
</dbReference>
<dbReference type="FunFam" id="3.40.50.620:FF:000077">
    <property type="entry name" value="Leucine--tRNA ligase"/>
    <property type="match status" value="1"/>
</dbReference>
<dbReference type="FunFam" id="1.10.730.10:FF:000011">
    <property type="entry name" value="Leucine--tRNA ligase chloroplastic/mitochondrial"/>
    <property type="match status" value="1"/>
</dbReference>
<dbReference type="Gene3D" id="3.40.50.620">
    <property type="entry name" value="HUPs"/>
    <property type="match status" value="2"/>
</dbReference>
<dbReference type="Gene3D" id="1.10.730.10">
    <property type="entry name" value="Isoleucyl-tRNA Synthetase, Domain 1"/>
    <property type="match status" value="1"/>
</dbReference>
<dbReference type="HAMAP" id="MF_00049_B">
    <property type="entry name" value="Leu_tRNA_synth_B"/>
    <property type="match status" value="1"/>
</dbReference>
<dbReference type="InterPro" id="IPR001412">
    <property type="entry name" value="aa-tRNA-synth_I_CS"/>
</dbReference>
<dbReference type="InterPro" id="IPR002300">
    <property type="entry name" value="aa-tRNA-synth_Ia"/>
</dbReference>
<dbReference type="InterPro" id="IPR002302">
    <property type="entry name" value="Leu-tRNA-ligase"/>
</dbReference>
<dbReference type="InterPro" id="IPR025709">
    <property type="entry name" value="Leu_tRNA-synth_edit"/>
</dbReference>
<dbReference type="InterPro" id="IPR013155">
    <property type="entry name" value="M/V/L/I-tRNA-synth_anticd-bd"/>
</dbReference>
<dbReference type="InterPro" id="IPR015413">
    <property type="entry name" value="Methionyl/Leucyl_tRNA_Synth"/>
</dbReference>
<dbReference type="InterPro" id="IPR014729">
    <property type="entry name" value="Rossmann-like_a/b/a_fold"/>
</dbReference>
<dbReference type="InterPro" id="IPR009080">
    <property type="entry name" value="tRNAsynth_Ia_anticodon-bd"/>
</dbReference>
<dbReference type="InterPro" id="IPR009008">
    <property type="entry name" value="Val/Leu/Ile-tRNA-synth_edit"/>
</dbReference>
<dbReference type="NCBIfam" id="TIGR00396">
    <property type="entry name" value="leuS_bact"/>
    <property type="match status" value="1"/>
</dbReference>
<dbReference type="PANTHER" id="PTHR43740:SF2">
    <property type="entry name" value="LEUCINE--TRNA LIGASE, MITOCHONDRIAL"/>
    <property type="match status" value="1"/>
</dbReference>
<dbReference type="PANTHER" id="PTHR43740">
    <property type="entry name" value="LEUCYL-TRNA SYNTHETASE"/>
    <property type="match status" value="1"/>
</dbReference>
<dbReference type="Pfam" id="PF08264">
    <property type="entry name" value="Anticodon_1"/>
    <property type="match status" value="1"/>
</dbReference>
<dbReference type="Pfam" id="PF00133">
    <property type="entry name" value="tRNA-synt_1"/>
    <property type="match status" value="2"/>
</dbReference>
<dbReference type="Pfam" id="PF13603">
    <property type="entry name" value="tRNA-synt_1_2"/>
    <property type="match status" value="1"/>
</dbReference>
<dbReference type="Pfam" id="PF09334">
    <property type="entry name" value="tRNA-synt_1g"/>
    <property type="match status" value="1"/>
</dbReference>
<dbReference type="PRINTS" id="PR00985">
    <property type="entry name" value="TRNASYNTHLEU"/>
</dbReference>
<dbReference type="SUPFAM" id="SSF47323">
    <property type="entry name" value="Anticodon-binding domain of a subclass of class I aminoacyl-tRNA synthetases"/>
    <property type="match status" value="1"/>
</dbReference>
<dbReference type="SUPFAM" id="SSF52374">
    <property type="entry name" value="Nucleotidylyl transferase"/>
    <property type="match status" value="1"/>
</dbReference>
<dbReference type="SUPFAM" id="SSF50677">
    <property type="entry name" value="ValRS/IleRS/LeuRS editing domain"/>
    <property type="match status" value="1"/>
</dbReference>
<dbReference type="PROSITE" id="PS00178">
    <property type="entry name" value="AA_TRNA_LIGASE_I"/>
    <property type="match status" value="1"/>
</dbReference>
<organism evidence="10">
    <name type="scientific">Arabidopsis thaliana</name>
    <name type="common">Mouse-ear cress</name>
    <dbReference type="NCBI Taxonomy" id="3702"/>
    <lineage>
        <taxon>Eukaryota</taxon>
        <taxon>Viridiplantae</taxon>
        <taxon>Streptophyta</taxon>
        <taxon>Embryophyta</taxon>
        <taxon>Tracheophyta</taxon>
        <taxon>Spermatophyta</taxon>
        <taxon>Magnoliopsida</taxon>
        <taxon>eudicotyledons</taxon>
        <taxon>Gunneridae</taxon>
        <taxon>Pentapetalae</taxon>
        <taxon>rosids</taxon>
        <taxon>malvids</taxon>
        <taxon>Brassicales</taxon>
        <taxon>Brassicaceae</taxon>
        <taxon>Camelineae</taxon>
        <taxon>Arabidopsis</taxon>
    </lineage>
</organism>
<comment type="function">
    <text evidence="3">Catalyzes the specific attachment of an amino acid to its cognate tRNA in a two step reaction: the amino acid (AA) is first activated by ATP to form AA-AMP and then transferred to the acceptor end of the tRNA.</text>
</comment>
<comment type="catalytic activity">
    <reaction evidence="6">
        <text>tRNA(Leu) + L-leucine + ATP = L-leucyl-tRNA(Leu) + AMP + diphosphate</text>
        <dbReference type="Rhea" id="RHEA:11688"/>
        <dbReference type="Rhea" id="RHEA-COMP:9613"/>
        <dbReference type="Rhea" id="RHEA-COMP:9622"/>
        <dbReference type="ChEBI" id="CHEBI:30616"/>
        <dbReference type="ChEBI" id="CHEBI:33019"/>
        <dbReference type="ChEBI" id="CHEBI:57427"/>
        <dbReference type="ChEBI" id="CHEBI:78442"/>
        <dbReference type="ChEBI" id="CHEBI:78494"/>
        <dbReference type="ChEBI" id="CHEBI:456215"/>
        <dbReference type="EC" id="6.1.1.4"/>
    </reaction>
</comment>
<comment type="subcellular location">
    <subcellularLocation>
        <location evidence="4">Plastid</location>
        <location evidence="4">Chloroplast</location>
    </subcellularLocation>
    <subcellularLocation>
        <location evidence="2">Mitochondrion</location>
    </subcellularLocation>
</comment>
<comment type="disruption phenotype">
    <text evidence="7">Embryo defective. Developmental arrest of the embryo at the globular stage.</text>
</comment>
<comment type="similarity">
    <text evidence="6">Belongs to the class-I aminoacyl-tRNA synthetase family.</text>
</comment>
<proteinExistence type="evidence at transcript level"/>
<evidence type="ECO:0000250" key="1"/>
<evidence type="ECO:0000250" key="2">
    <source>
        <dbReference type="UniProtKB" id="Q8RXK8"/>
    </source>
</evidence>
<evidence type="ECO:0000250" key="3">
    <source>
        <dbReference type="UniProtKB" id="Q9P2J5"/>
    </source>
</evidence>
<evidence type="ECO:0000269" key="4">
    <source>
    </source>
</evidence>
<evidence type="ECO:0000303" key="5">
    <source>
    </source>
</evidence>
<evidence type="ECO:0000305" key="6"/>
<evidence type="ECO:0000305" key="7">
    <source>
    </source>
</evidence>
<evidence type="ECO:0000312" key="8">
    <source>
        <dbReference type="Araport" id="AT4G04350"/>
    </source>
</evidence>
<evidence type="ECO:0000312" key="9">
    <source>
        <dbReference type="EMBL" id="AAD36946.1"/>
    </source>
</evidence>
<evidence type="ECO:0000312" key="10">
    <source>
        <dbReference type="Proteomes" id="UP000006548"/>
    </source>
</evidence>
<gene>
    <name evidence="5" type="primary">EMB2369</name>
    <name evidence="8" type="ordered locus">At4g04350</name>
    <name evidence="9" type="ORF">T19B17.7</name>
</gene>
<accession>Q9XEA0</accession>
<feature type="transit peptide" description="Chloroplast and mitochondrion" evidence="6">
    <location>
        <begin position="1"/>
        <end status="unknown"/>
    </location>
</feature>
<feature type="chain" id="PRO_0000433548" description="Leucine--tRNA ligase, chloroplastic/mitochondrial" evidence="6">
    <location>
        <begin status="unknown"/>
        <end position="973"/>
    </location>
</feature>
<feature type="short sequence motif" description="'HIGH' region" evidence="6">
    <location>
        <begin position="126"/>
        <end position="135"/>
    </location>
</feature>
<feature type="short sequence motif" description="'KMSKS' region" evidence="6">
    <location>
        <begin position="730"/>
        <end position="734"/>
    </location>
</feature>
<feature type="binding site" evidence="1">
    <location>
        <position position="733"/>
    </location>
    <ligand>
        <name>ATP</name>
        <dbReference type="ChEBI" id="CHEBI:30616"/>
    </ligand>
</feature>
<name>SYLM_ARATH</name>